<name>Y4577_RHOP5</name>
<accession>Q07HT7</accession>
<sequence>MLVHIPEVLSRDQVRHCRELMARADWVDGRITAGHQSAQVKRNLQLPEGTPEARELSELVHGALSRHPLFMSAALPKTIFPPLFNRYDADGEMNFGSHVDNAIRTVPGTGVRVRTDVSSTLFLSDPDEYDGGELVVEDTYGSHAAKLPAGDMVVYPGTSLHHVTKVTRGSRIASFFWTQSLIADVTRRAMMFDLDMSIIRLNADHPDHPSVLSLTGLYHNLLRQWAEV</sequence>
<organism>
    <name type="scientific">Rhodopseudomonas palustris (strain BisA53)</name>
    <dbReference type="NCBI Taxonomy" id="316055"/>
    <lineage>
        <taxon>Bacteria</taxon>
        <taxon>Pseudomonadati</taxon>
        <taxon>Pseudomonadota</taxon>
        <taxon>Alphaproteobacteria</taxon>
        <taxon>Hyphomicrobiales</taxon>
        <taxon>Nitrobacteraceae</taxon>
        <taxon>Rhodopseudomonas</taxon>
    </lineage>
</organism>
<keyword id="KW-0223">Dioxygenase</keyword>
<keyword id="KW-0408">Iron</keyword>
<keyword id="KW-0479">Metal-binding</keyword>
<keyword id="KW-0560">Oxidoreductase</keyword>
<keyword id="KW-0847">Vitamin C</keyword>
<proteinExistence type="inferred from homology"/>
<comment type="cofactor">
    <cofactor evidence="1">
        <name>Fe(2+)</name>
        <dbReference type="ChEBI" id="CHEBI:29033"/>
    </cofactor>
    <text evidence="1">Binds 1 Fe(2+) ion per subunit.</text>
</comment>
<comment type="cofactor">
    <cofactor evidence="1">
        <name>L-ascorbate</name>
        <dbReference type="ChEBI" id="CHEBI:38290"/>
    </cofactor>
</comment>
<protein>
    <recommendedName>
        <fullName evidence="1">PKHD-type hydroxylase RPE_4577</fullName>
        <ecNumber evidence="1">1.14.11.-</ecNumber>
    </recommendedName>
</protein>
<gene>
    <name type="ordered locus">RPE_4577</name>
</gene>
<feature type="chain" id="PRO_1000061735" description="PKHD-type hydroxylase RPE_4577">
    <location>
        <begin position="1"/>
        <end position="228"/>
    </location>
</feature>
<feature type="domain" description="Fe2OG dioxygenase" evidence="1">
    <location>
        <begin position="78"/>
        <end position="180"/>
    </location>
</feature>
<feature type="binding site" evidence="1">
    <location>
        <position position="98"/>
    </location>
    <ligand>
        <name>Fe cation</name>
        <dbReference type="ChEBI" id="CHEBI:24875"/>
    </ligand>
</feature>
<feature type="binding site" evidence="1">
    <location>
        <position position="100"/>
    </location>
    <ligand>
        <name>Fe cation</name>
        <dbReference type="ChEBI" id="CHEBI:24875"/>
    </ligand>
</feature>
<feature type="binding site" evidence="1">
    <location>
        <position position="161"/>
    </location>
    <ligand>
        <name>Fe cation</name>
        <dbReference type="ChEBI" id="CHEBI:24875"/>
    </ligand>
</feature>
<feature type="binding site" evidence="1">
    <location>
        <position position="171"/>
    </location>
    <ligand>
        <name>2-oxoglutarate</name>
        <dbReference type="ChEBI" id="CHEBI:16810"/>
    </ligand>
</feature>
<dbReference type="EC" id="1.14.11.-" evidence="1"/>
<dbReference type="EMBL" id="CP000463">
    <property type="protein sequence ID" value="ABJ08497.1"/>
    <property type="molecule type" value="Genomic_DNA"/>
</dbReference>
<dbReference type="SMR" id="Q07HT7"/>
<dbReference type="STRING" id="316055.RPE_4577"/>
<dbReference type="KEGG" id="rpe:RPE_4577"/>
<dbReference type="eggNOG" id="COG3128">
    <property type="taxonomic scope" value="Bacteria"/>
</dbReference>
<dbReference type="HOGENOM" id="CLU_106663_0_0_5"/>
<dbReference type="OrthoDB" id="9812472at2"/>
<dbReference type="GO" id="GO:0016706">
    <property type="term" value="F:2-oxoglutarate-dependent dioxygenase activity"/>
    <property type="evidence" value="ECO:0007669"/>
    <property type="project" value="UniProtKB-UniRule"/>
</dbReference>
<dbReference type="GO" id="GO:0005506">
    <property type="term" value="F:iron ion binding"/>
    <property type="evidence" value="ECO:0007669"/>
    <property type="project" value="UniProtKB-UniRule"/>
</dbReference>
<dbReference type="GO" id="GO:0031418">
    <property type="term" value="F:L-ascorbic acid binding"/>
    <property type="evidence" value="ECO:0007669"/>
    <property type="project" value="UniProtKB-KW"/>
</dbReference>
<dbReference type="GO" id="GO:0006974">
    <property type="term" value="P:DNA damage response"/>
    <property type="evidence" value="ECO:0007669"/>
    <property type="project" value="TreeGrafter"/>
</dbReference>
<dbReference type="GO" id="GO:0006879">
    <property type="term" value="P:intracellular iron ion homeostasis"/>
    <property type="evidence" value="ECO:0007669"/>
    <property type="project" value="TreeGrafter"/>
</dbReference>
<dbReference type="Gene3D" id="2.60.120.620">
    <property type="entry name" value="q2cbj1_9rhob like domain"/>
    <property type="match status" value="1"/>
</dbReference>
<dbReference type="Gene3D" id="4.10.860.20">
    <property type="entry name" value="Rabenosyn, Rab binding domain"/>
    <property type="match status" value="1"/>
</dbReference>
<dbReference type="HAMAP" id="MF_00657">
    <property type="entry name" value="Hydroxyl_YbiX"/>
    <property type="match status" value="1"/>
</dbReference>
<dbReference type="InterPro" id="IPR005123">
    <property type="entry name" value="Oxoglu/Fe-dep_dioxygenase_dom"/>
</dbReference>
<dbReference type="InterPro" id="IPR041097">
    <property type="entry name" value="PKHD_C"/>
</dbReference>
<dbReference type="InterPro" id="IPR023550">
    <property type="entry name" value="PKHD_hydroxylase"/>
</dbReference>
<dbReference type="InterPro" id="IPR006620">
    <property type="entry name" value="Pro_4_hyd_alph"/>
</dbReference>
<dbReference type="InterPro" id="IPR044862">
    <property type="entry name" value="Pro_4_hyd_alph_FE2OG_OXY"/>
</dbReference>
<dbReference type="NCBIfam" id="NF003973">
    <property type="entry name" value="PRK05467.1-2"/>
    <property type="match status" value="1"/>
</dbReference>
<dbReference type="NCBIfam" id="NF003974">
    <property type="entry name" value="PRK05467.1-3"/>
    <property type="match status" value="1"/>
</dbReference>
<dbReference type="NCBIfam" id="NF003975">
    <property type="entry name" value="PRK05467.1-4"/>
    <property type="match status" value="1"/>
</dbReference>
<dbReference type="PANTHER" id="PTHR41536">
    <property type="entry name" value="PKHD-TYPE HYDROXYLASE YBIX"/>
    <property type="match status" value="1"/>
</dbReference>
<dbReference type="PANTHER" id="PTHR41536:SF1">
    <property type="entry name" value="PKHD-TYPE HYDROXYLASE YBIX"/>
    <property type="match status" value="1"/>
</dbReference>
<dbReference type="Pfam" id="PF13640">
    <property type="entry name" value="2OG-FeII_Oxy_3"/>
    <property type="match status" value="1"/>
</dbReference>
<dbReference type="Pfam" id="PF18331">
    <property type="entry name" value="PKHD_C"/>
    <property type="match status" value="1"/>
</dbReference>
<dbReference type="SMART" id="SM00702">
    <property type="entry name" value="P4Hc"/>
    <property type="match status" value="1"/>
</dbReference>
<dbReference type="PROSITE" id="PS51471">
    <property type="entry name" value="FE2OG_OXY"/>
    <property type="match status" value="1"/>
</dbReference>
<evidence type="ECO:0000255" key="1">
    <source>
        <dbReference type="HAMAP-Rule" id="MF_00657"/>
    </source>
</evidence>
<reference key="1">
    <citation type="submission" date="2006-09" db="EMBL/GenBank/DDBJ databases">
        <title>Complete sequence of Rhodopseudomonas palustris BisA53.</title>
        <authorList>
            <consortium name="US DOE Joint Genome Institute"/>
            <person name="Copeland A."/>
            <person name="Lucas S."/>
            <person name="Lapidus A."/>
            <person name="Barry K."/>
            <person name="Detter J.C."/>
            <person name="Glavina del Rio T."/>
            <person name="Hammon N."/>
            <person name="Israni S."/>
            <person name="Dalin E."/>
            <person name="Tice H."/>
            <person name="Pitluck S."/>
            <person name="Chain P."/>
            <person name="Malfatti S."/>
            <person name="Shin M."/>
            <person name="Vergez L."/>
            <person name="Schmutz J."/>
            <person name="Larimer F."/>
            <person name="Land M."/>
            <person name="Hauser L."/>
            <person name="Pelletier D.A."/>
            <person name="Kyrpides N."/>
            <person name="Kim E."/>
            <person name="Harwood C.S."/>
            <person name="Oda Y."/>
            <person name="Richardson P."/>
        </authorList>
    </citation>
    <scope>NUCLEOTIDE SEQUENCE [LARGE SCALE GENOMIC DNA]</scope>
    <source>
        <strain>BisA53</strain>
    </source>
</reference>